<feature type="chain" id="PRO_0000316280" description="Protein translocase subunit SecF">
    <location>
        <begin position="1"/>
        <end position="303"/>
    </location>
</feature>
<feature type="transmembrane region" description="Helical" evidence="1">
    <location>
        <begin position="28"/>
        <end position="48"/>
    </location>
</feature>
<feature type="transmembrane region" description="Helical" evidence="1">
    <location>
        <begin position="140"/>
        <end position="160"/>
    </location>
</feature>
<feature type="transmembrane region" description="Helical" evidence="1">
    <location>
        <begin position="164"/>
        <end position="184"/>
    </location>
</feature>
<feature type="transmembrane region" description="Helical" evidence="1">
    <location>
        <begin position="194"/>
        <end position="214"/>
    </location>
</feature>
<feature type="transmembrane region" description="Helical" evidence="1">
    <location>
        <begin position="246"/>
        <end position="266"/>
    </location>
</feature>
<feature type="transmembrane region" description="Helical" evidence="1">
    <location>
        <begin position="272"/>
        <end position="292"/>
    </location>
</feature>
<evidence type="ECO:0000255" key="1">
    <source>
        <dbReference type="HAMAP-Rule" id="MF_01464"/>
    </source>
</evidence>
<accession>A8GYD9</accession>
<name>SECF_RICB8</name>
<protein>
    <recommendedName>
        <fullName>Protein translocase subunit SecF</fullName>
    </recommendedName>
</protein>
<gene>
    <name evidence="1" type="primary">secF</name>
    <name type="ordered locus">A1I_01360</name>
</gene>
<dbReference type="EMBL" id="CP000849">
    <property type="protein sequence ID" value="ABV78664.1"/>
    <property type="molecule type" value="Genomic_DNA"/>
</dbReference>
<dbReference type="RefSeq" id="WP_011477843.1">
    <property type="nucleotide sequence ID" value="NC_009883.1"/>
</dbReference>
<dbReference type="SMR" id="A8GYD9"/>
<dbReference type="KEGG" id="rbo:A1I_01360"/>
<dbReference type="HOGENOM" id="CLU_050012_1_1_5"/>
<dbReference type="GO" id="GO:0005886">
    <property type="term" value="C:plasma membrane"/>
    <property type="evidence" value="ECO:0007669"/>
    <property type="project" value="UniProtKB-SubCell"/>
</dbReference>
<dbReference type="GO" id="GO:0015450">
    <property type="term" value="F:protein-transporting ATPase activity"/>
    <property type="evidence" value="ECO:0007669"/>
    <property type="project" value="InterPro"/>
</dbReference>
<dbReference type="GO" id="GO:0065002">
    <property type="term" value="P:intracellular protein transmembrane transport"/>
    <property type="evidence" value="ECO:0007669"/>
    <property type="project" value="UniProtKB-UniRule"/>
</dbReference>
<dbReference type="GO" id="GO:0006605">
    <property type="term" value="P:protein targeting"/>
    <property type="evidence" value="ECO:0007669"/>
    <property type="project" value="UniProtKB-UniRule"/>
</dbReference>
<dbReference type="GO" id="GO:0043952">
    <property type="term" value="P:protein transport by the Sec complex"/>
    <property type="evidence" value="ECO:0007669"/>
    <property type="project" value="UniProtKB-UniRule"/>
</dbReference>
<dbReference type="FunFam" id="1.20.1640.10:FF:000024">
    <property type="entry name" value="Multifunctional fusion protein"/>
    <property type="match status" value="1"/>
</dbReference>
<dbReference type="Gene3D" id="1.20.1640.10">
    <property type="entry name" value="Multidrug efflux transporter AcrB transmembrane domain"/>
    <property type="match status" value="1"/>
</dbReference>
<dbReference type="HAMAP" id="MF_01464_B">
    <property type="entry name" value="SecF_B"/>
    <property type="match status" value="1"/>
</dbReference>
<dbReference type="InterPro" id="IPR022813">
    <property type="entry name" value="SecD/SecF_arch_bac"/>
</dbReference>
<dbReference type="InterPro" id="IPR022645">
    <property type="entry name" value="SecD/SecF_bac"/>
</dbReference>
<dbReference type="InterPro" id="IPR022646">
    <property type="entry name" value="SecD/SecF_CS"/>
</dbReference>
<dbReference type="InterPro" id="IPR048634">
    <property type="entry name" value="SecD_SecF_C"/>
</dbReference>
<dbReference type="InterPro" id="IPR055344">
    <property type="entry name" value="SecD_SecF_C_bact"/>
</dbReference>
<dbReference type="InterPro" id="IPR005665">
    <property type="entry name" value="SecF_bac"/>
</dbReference>
<dbReference type="InterPro" id="IPR000731">
    <property type="entry name" value="SSD"/>
</dbReference>
<dbReference type="NCBIfam" id="TIGR00916">
    <property type="entry name" value="2A0604s01"/>
    <property type="match status" value="1"/>
</dbReference>
<dbReference type="NCBIfam" id="TIGR00966">
    <property type="entry name" value="transloc_SecF"/>
    <property type="match status" value="1"/>
</dbReference>
<dbReference type="PANTHER" id="PTHR30081:SF8">
    <property type="entry name" value="PROTEIN TRANSLOCASE SUBUNIT SECF"/>
    <property type="match status" value="1"/>
</dbReference>
<dbReference type="PANTHER" id="PTHR30081">
    <property type="entry name" value="PROTEIN-EXPORT MEMBRANE PROTEIN SEC"/>
    <property type="match status" value="1"/>
</dbReference>
<dbReference type="Pfam" id="PF07549">
    <property type="entry name" value="Sec_GG"/>
    <property type="match status" value="1"/>
</dbReference>
<dbReference type="Pfam" id="PF02355">
    <property type="entry name" value="SecD_SecF_C"/>
    <property type="match status" value="1"/>
</dbReference>
<dbReference type="PRINTS" id="PR01755">
    <property type="entry name" value="SECFTRNLCASE"/>
</dbReference>
<dbReference type="SUPFAM" id="SSF82866">
    <property type="entry name" value="Multidrug efflux transporter AcrB transmembrane domain"/>
    <property type="match status" value="1"/>
</dbReference>
<dbReference type="PROSITE" id="PS50156">
    <property type="entry name" value="SSD"/>
    <property type="match status" value="1"/>
</dbReference>
<keyword id="KW-0997">Cell inner membrane</keyword>
<keyword id="KW-1003">Cell membrane</keyword>
<keyword id="KW-0472">Membrane</keyword>
<keyword id="KW-0653">Protein transport</keyword>
<keyword id="KW-0811">Translocation</keyword>
<keyword id="KW-0812">Transmembrane</keyword>
<keyword id="KW-1133">Transmembrane helix</keyword>
<keyword id="KW-0813">Transport</keyword>
<sequence>MQIYPLRLLPNKIDFDFMNFKKVSYTFSIILSLISFIWIGMYKFNFGIDFAGGIVIEVRLDQTPDLPKMRQVLGELGIGEVVLQNFGSERDLSIRFGSSSEDNLMKNIELIKSTLQNNFPYNFEYRKVDFVGPQVGRQLIEAGTMAMLFSFAAIMIYIWVRFEWYFGLGILIALVHDVILALGFMSITKLDFNLSTIAAVLTIIGYSVNDSVVIYDRIRENLRKYHKKGITEIINLSINETLSRTILTVVTTLLANLALVLFGGEAIRSFSVLVFFGIIAGTYSSIFISAPILTIFANKKFEK</sequence>
<proteinExistence type="inferred from homology"/>
<comment type="function">
    <text evidence="1">Part of the Sec protein translocase complex. Interacts with the SecYEG preprotein conducting channel. SecDF uses the proton motive force (PMF) to complete protein translocation after the ATP-dependent function of SecA.</text>
</comment>
<comment type="subunit">
    <text evidence="1">Forms a complex with SecD. Part of the essential Sec protein translocation apparatus which comprises SecA, SecYEG and auxiliary proteins SecDF-YajC and YidC.</text>
</comment>
<comment type="subcellular location">
    <subcellularLocation>
        <location evidence="1">Cell inner membrane</location>
        <topology evidence="1">Multi-pass membrane protein</topology>
    </subcellularLocation>
</comment>
<comment type="similarity">
    <text evidence="1">Belongs to the SecD/SecF family. SecF subfamily.</text>
</comment>
<organism>
    <name type="scientific">Rickettsia bellii (strain OSU 85-389)</name>
    <dbReference type="NCBI Taxonomy" id="391896"/>
    <lineage>
        <taxon>Bacteria</taxon>
        <taxon>Pseudomonadati</taxon>
        <taxon>Pseudomonadota</taxon>
        <taxon>Alphaproteobacteria</taxon>
        <taxon>Rickettsiales</taxon>
        <taxon>Rickettsiaceae</taxon>
        <taxon>Rickettsieae</taxon>
        <taxon>Rickettsia</taxon>
        <taxon>belli group</taxon>
    </lineage>
</organism>
<reference key="1">
    <citation type="submission" date="2007-09" db="EMBL/GenBank/DDBJ databases">
        <title>Complete genome sequencing of Rickettsia bellii.</title>
        <authorList>
            <person name="Madan A."/>
            <person name="Lee H."/>
            <person name="Madan A."/>
            <person name="Yoon J.-G."/>
            <person name="Ryu G.-Y."/>
            <person name="Dasch G."/>
            <person name="Ereemeva M."/>
        </authorList>
    </citation>
    <scope>NUCLEOTIDE SEQUENCE [LARGE SCALE GENOMIC DNA]</scope>
    <source>
        <strain>OSU 85-389</strain>
    </source>
</reference>